<protein>
    <recommendedName>
        <fullName evidence="1">Inosine-5'-monophosphate dehydrogenase</fullName>
        <shortName evidence="1">IMP dehydrogenase</shortName>
        <shortName evidence="1">IMPD</shortName>
        <shortName evidence="1">IMPDH</shortName>
        <ecNumber evidence="1">1.1.1.205</ecNumber>
    </recommendedName>
</protein>
<keyword id="KW-0129">CBS domain</keyword>
<keyword id="KW-0332">GMP biosynthesis</keyword>
<keyword id="KW-0479">Metal-binding</keyword>
<keyword id="KW-0520">NAD</keyword>
<keyword id="KW-0560">Oxidoreductase</keyword>
<keyword id="KW-0630">Potassium</keyword>
<keyword id="KW-0658">Purine biosynthesis</keyword>
<keyword id="KW-0677">Repeat</keyword>
<evidence type="ECO:0000255" key="1">
    <source>
        <dbReference type="HAMAP-Rule" id="MF_01964"/>
    </source>
</evidence>
<evidence type="ECO:0000256" key="2">
    <source>
        <dbReference type="SAM" id="MobiDB-lite"/>
    </source>
</evidence>
<name>IMDH_STAHJ</name>
<comment type="function">
    <text evidence="1">Catalyzes the conversion of inosine 5'-phosphate (IMP) to xanthosine 5'-phosphate (XMP), the first committed and rate-limiting step in the de novo synthesis of guanine nucleotides, and therefore plays an important role in the regulation of cell growth.</text>
</comment>
<comment type="catalytic activity">
    <reaction evidence="1">
        <text>IMP + NAD(+) + H2O = XMP + NADH + H(+)</text>
        <dbReference type="Rhea" id="RHEA:11708"/>
        <dbReference type="ChEBI" id="CHEBI:15377"/>
        <dbReference type="ChEBI" id="CHEBI:15378"/>
        <dbReference type="ChEBI" id="CHEBI:57464"/>
        <dbReference type="ChEBI" id="CHEBI:57540"/>
        <dbReference type="ChEBI" id="CHEBI:57945"/>
        <dbReference type="ChEBI" id="CHEBI:58053"/>
        <dbReference type="EC" id="1.1.1.205"/>
    </reaction>
</comment>
<comment type="cofactor">
    <cofactor evidence="1">
        <name>K(+)</name>
        <dbReference type="ChEBI" id="CHEBI:29103"/>
    </cofactor>
</comment>
<comment type="activity regulation">
    <text evidence="1">Mycophenolic acid (MPA) is a non-competitive inhibitor that prevents formation of the closed enzyme conformation by binding to the same site as the amobile flap. In contrast, mizoribine monophosphate (MZP) is a competitive inhibitor that induces the closed conformation. MPA is a potent inhibitor of mammalian IMPDHs but a poor inhibitor of the bacterial enzymes. MZP is a more potent inhibitor of bacterial IMPDH.</text>
</comment>
<comment type="pathway">
    <text evidence="1">Purine metabolism; XMP biosynthesis via de novo pathway; XMP from IMP: step 1/1.</text>
</comment>
<comment type="subunit">
    <text evidence="1">Homotetramer.</text>
</comment>
<comment type="similarity">
    <text evidence="1">Belongs to the IMPDH/GMPR family.</text>
</comment>
<organism>
    <name type="scientific">Staphylococcus haemolyticus (strain JCSC1435)</name>
    <dbReference type="NCBI Taxonomy" id="279808"/>
    <lineage>
        <taxon>Bacteria</taxon>
        <taxon>Bacillati</taxon>
        <taxon>Bacillota</taxon>
        <taxon>Bacilli</taxon>
        <taxon>Bacillales</taxon>
        <taxon>Staphylococcaceae</taxon>
        <taxon>Staphylococcus</taxon>
    </lineage>
</organism>
<gene>
    <name evidence="1" type="primary">guaB</name>
    <name type="ordered locus">SH2583</name>
</gene>
<sequence>MWENKFAKESLTFDDVLLIPAASDVLPNDADLSVELSERIKLNIPVISAGMDTVTESKMAIAMARQGGLGVIHKNMGIEEQAEEVQKVKRSENGVITNPFYLTPDESVYEAEALMGKYRISGVPIVSDKESRELVGILTNRDLRFIEDFSIKISDVMTKENLITAPVGTTLDEAETILQEHKIEKLPLVENGRLEGLITIKDIEKVLEFPHAAKDAHGRLLAAAAIGTSKDTEIRAQKLVEAGVDALIIDTAHGHSSGVIQEVKKMKEKYPEITIVAGNVATAEATRALFEAGADVVKVGIGPGSICTTRVVAGVGVPQITAIYDCATEARKFGKAIIADGGIKFSGDIIKALAAGGHAVMLGSLLAGTEESPGATEVFQGRQYKVYRGMGSLGAMEKGSNDRYFQEDKTPRKFVPEGIEGRTAYKGPLQDTIYQLMGGVRAGMGYTGSPDLKTLRDEAQFTRMGPAGLAESHPHNVQITKESPNYSF</sequence>
<feature type="chain" id="PRO_0000287362" description="Inosine-5'-monophosphate dehydrogenase">
    <location>
        <begin position="1"/>
        <end position="488"/>
    </location>
</feature>
<feature type="domain" description="CBS 1" evidence="1">
    <location>
        <begin position="95"/>
        <end position="153"/>
    </location>
</feature>
<feature type="domain" description="CBS 2" evidence="1">
    <location>
        <begin position="157"/>
        <end position="213"/>
    </location>
</feature>
<feature type="region of interest" description="Disordered" evidence="2">
    <location>
        <begin position="467"/>
        <end position="488"/>
    </location>
</feature>
<feature type="compositionally biased region" description="Polar residues" evidence="2">
    <location>
        <begin position="475"/>
        <end position="488"/>
    </location>
</feature>
<feature type="active site" description="Thioimidate intermediate" evidence="1">
    <location>
        <position position="307"/>
    </location>
</feature>
<feature type="active site" description="Proton acceptor" evidence="1">
    <location>
        <position position="403"/>
    </location>
</feature>
<feature type="binding site" evidence="1">
    <location>
        <position position="250"/>
    </location>
    <ligand>
        <name>NAD(+)</name>
        <dbReference type="ChEBI" id="CHEBI:57540"/>
    </ligand>
</feature>
<feature type="binding site" evidence="1">
    <location>
        <begin position="300"/>
        <end position="302"/>
    </location>
    <ligand>
        <name>NAD(+)</name>
        <dbReference type="ChEBI" id="CHEBI:57540"/>
    </ligand>
</feature>
<feature type="binding site" description="in other chain" evidence="1">
    <location>
        <position position="302"/>
    </location>
    <ligand>
        <name>K(+)</name>
        <dbReference type="ChEBI" id="CHEBI:29103"/>
        <note>ligand shared between two tetrameric partners</note>
    </ligand>
</feature>
<feature type="binding site" description="in other chain" evidence="1">
    <location>
        <position position="304"/>
    </location>
    <ligand>
        <name>K(+)</name>
        <dbReference type="ChEBI" id="CHEBI:29103"/>
        <note>ligand shared between two tetrameric partners</note>
    </ligand>
</feature>
<feature type="binding site" evidence="1">
    <location>
        <position position="305"/>
    </location>
    <ligand>
        <name>IMP</name>
        <dbReference type="ChEBI" id="CHEBI:58053"/>
    </ligand>
</feature>
<feature type="binding site" description="in other chain" evidence="1">
    <location>
        <position position="307"/>
    </location>
    <ligand>
        <name>K(+)</name>
        <dbReference type="ChEBI" id="CHEBI:29103"/>
        <note>ligand shared between two tetrameric partners</note>
    </ligand>
</feature>
<feature type="binding site" evidence="1">
    <location>
        <begin position="340"/>
        <end position="342"/>
    </location>
    <ligand>
        <name>IMP</name>
        <dbReference type="ChEBI" id="CHEBI:58053"/>
    </ligand>
</feature>
<feature type="binding site" evidence="1">
    <location>
        <begin position="363"/>
        <end position="364"/>
    </location>
    <ligand>
        <name>IMP</name>
        <dbReference type="ChEBI" id="CHEBI:58053"/>
    </ligand>
</feature>
<feature type="binding site" evidence="1">
    <location>
        <begin position="387"/>
        <end position="391"/>
    </location>
    <ligand>
        <name>IMP</name>
        <dbReference type="ChEBI" id="CHEBI:58053"/>
    </ligand>
</feature>
<feature type="binding site" evidence="1">
    <location>
        <position position="417"/>
    </location>
    <ligand>
        <name>IMP</name>
        <dbReference type="ChEBI" id="CHEBI:58053"/>
    </ligand>
</feature>
<feature type="binding site" evidence="1">
    <location>
        <position position="471"/>
    </location>
    <ligand>
        <name>K(+)</name>
        <dbReference type="ChEBI" id="CHEBI:29103"/>
        <note>ligand shared between two tetrameric partners</note>
    </ligand>
</feature>
<feature type="binding site" evidence="1">
    <location>
        <position position="472"/>
    </location>
    <ligand>
        <name>K(+)</name>
        <dbReference type="ChEBI" id="CHEBI:29103"/>
        <note>ligand shared between two tetrameric partners</note>
    </ligand>
</feature>
<feature type="binding site" evidence="1">
    <location>
        <position position="473"/>
    </location>
    <ligand>
        <name>K(+)</name>
        <dbReference type="ChEBI" id="CHEBI:29103"/>
        <note>ligand shared between two tetrameric partners</note>
    </ligand>
</feature>
<accession>Q4L385</accession>
<dbReference type="EC" id="1.1.1.205" evidence="1"/>
<dbReference type="EMBL" id="AP006716">
    <property type="protein sequence ID" value="BAE05892.1"/>
    <property type="molecule type" value="Genomic_DNA"/>
</dbReference>
<dbReference type="RefSeq" id="WP_011276829.1">
    <property type="nucleotide sequence ID" value="NC_007168.1"/>
</dbReference>
<dbReference type="SMR" id="Q4L385"/>
<dbReference type="KEGG" id="sha:SH2583"/>
<dbReference type="eggNOG" id="COG0516">
    <property type="taxonomic scope" value="Bacteria"/>
</dbReference>
<dbReference type="eggNOG" id="COG0517">
    <property type="taxonomic scope" value="Bacteria"/>
</dbReference>
<dbReference type="HOGENOM" id="CLU_022552_1_0_9"/>
<dbReference type="OrthoDB" id="9805398at2"/>
<dbReference type="UniPathway" id="UPA00601">
    <property type="reaction ID" value="UER00295"/>
</dbReference>
<dbReference type="Proteomes" id="UP000000543">
    <property type="component" value="Chromosome"/>
</dbReference>
<dbReference type="GO" id="GO:0003938">
    <property type="term" value="F:IMP dehydrogenase activity"/>
    <property type="evidence" value="ECO:0007669"/>
    <property type="project" value="UniProtKB-UniRule"/>
</dbReference>
<dbReference type="GO" id="GO:0046872">
    <property type="term" value="F:metal ion binding"/>
    <property type="evidence" value="ECO:0007669"/>
    <property type="project" value="UniProtKB-UniRule"/>
</dbReference>
<dbReference type="GO" id="GO:0000166">
    <property type="term" value="F:nucleotide binding"/>
    <property type="evidence" value="ECO:0007669"/>
    <property type="project" value="UniProtKB-UniRule"/>
</dbReference>
<dbReference type="GO" id="GO:0006177">
    <property type="term" value="P:GMP biosynthetic process"/>
    <property type="evidence" value="ECO:0007669"/>
    <property type="project" value="UniProtKB-UniRule"/>
</dbReference>
<dbReference type="GO" id="GO:0006183">
    <property type="term" value="P:GTP biosynthetic process"/>
    <property type="evidence" value="ECO:0007669"/>
    <property type="project" value="TreeGrafter"/>
</dbReference>
<dbReference type="CDD" id="cd04601">
    <property type="entry name" value="CBS_pair_IMPDH"/>
    <property type="match status" value="1"/>
</dbReference>
<dbReference type="CDD" id="cd00381">
    <property type="entry name" value="IMPDH"/>
    <property type="match status" value="1"/>
</dbReference>
<dbReference type="FunFam" id="3.20.20.70:FF:000003">
    <property type="entry name" value="GMP reductase"/>
    <property type="match status" value="1"/>
</dbReference>
<dbReference type="Gene3D" id="3.20.20.70">
    <property type="entry name" value="Aldolase class I"/>
    <property type="match status" value="1"/>
</dbReference>
<dbReference type="HAMAP" id="MF_01964">
    <property type="entry name" value="IMPDH"/>
    <property type="match status" value="1"/>
</dbReference>
<dbReference type="InterPro" id="IPR013785">
    <property type="entry name" value="Aldolase_TIM"/>
</dbReference>
<dbReference type="InterPro" id="IPR000644">
    <property type="entry name" value="CBS_dom"/>
</dbReference>
<dbReference type="InterPro" id="IPR046342">
    <property type="entry name" value="CBS_dom_sf"/>
</dbReference>
<dbReference type="InterPro" id="IPR005990">
    <property type="entry name" value="IMP_DH"/>
</dbReference>
<dbReference type="InterPro" id="IPR015875">
    <property type="entry name" value="IMP_DH/GMP_Rdtase_CS"/>
</dbReference>
<dbReference type="InterPro" id="IPR001093">
    <property type="entry name" value="IMP_DH_GMPRt"/>
</dbReference>
<dbReference type="NCBIfam" id="TIGR01302">
    <property type="entry name" value="IMP_dehydrog"/>
    <property type="match status" value="1"/>
</dbReference>
<dbReference type="PANTHER" id="PTHR11911:SF111">
    <property type="entry name" value="INOSINE-5'-MONOPHOSPHATE DEHYDROGENASE"/>
    <property type="match status" value="1"/>
</dbReference>
<dbReference type="PANTHER" id="PTHR11911">
    <property type="entry name" value="INOSINE-5-MONOPHOSPHATE DEHYDROGENASE RELATED"/>
    <property type="match status" value="1"/>
</dbReference>
<dbReference type="Pfam" id="PF00571">
    <property type="entry name" value="CBS"/>
    <property type="match status" value="2"/>
</dbReference>
<dbReference type="Pfam" id="PF00478">
    <property type="entry name" value="IMPDH"/>
    <property type="match status" value="1"/>
</dbReference>
<dbReference type="PIRSF" id="PIRSF000130">
    <property type="entry name" value="IMPDH"/>
    <property type="match status" value="1"/>
</dbReference>
<dbReference type="SMART" id="SM00116">
    <property type="entry name" value="CBS"/>
    <property type="match status" value="2"/>
</dbReference>
<dbReference type="SMART" id="SM01240">
    <property type="entry name" value="IMPDH"/>
    <property type="match status" value="1"/>
</dbReference>
<dbReference type="SUPFAM" id="SSF54631">
    <property type="entry name" value="CBS-domain pair"/>
    <property type="match status" value="1"/>
</dbReference>
<dbReference type="SUPFAM" id="SSF51412">
    <property type="entry name" value="Inosine monophosphate dehydrogenase (IMPDH)"/>
    <property type="match status" value="1"/>
</dbReference>
<dbReference type="PROSITE" id="PS51371">
    <property type="entry name" value="CBS"/>
    <property type="match status" value="2"/>
</dbReference>
<dbReference type="PROSITE" id="PS00487">
    <property type="entry name" value="IMP_DH_GMP_RED"/>
    <property type="match status" value="1"/>
</dbReference>
<reference key="1">
    <citation type="journal article" date="2005" name="J. Bacteriol.">
        <title>Whole-genome sequencing of Staphylococcus haemolyticus uncovers the extreme plasticity of its genome and the evolution of human-colonizing staphylococcal species.</title>
        <authorList>
            <person name="Takeuchi F."/>
            <person name="Watanabe S."/>
            <person name="Baba T."/>
            <person name="Yuzawa H."/>
            <person name="Ito T."/>
            <person name="Morimoto Y."/>
            <person name="Kuroda M."/>
            <person name="Cui L."/>
            <person name="Takahashi M."/>
            <person name="Ankai A."/>
            <person name="Baba S."/>
            <person name="Fukui S."/>
            <person name="Lee J.C."/>
            <person name="Hiramatsu K."/>
        </authorList>
    </citation>
    <scope>NUCLEOTIDE SEQUENCE [LARGE SCALE GENOMIC DNA]</scope>
    <source>
        <strain>JCSC1435</strain>
    </source>
</reference>
<proteinExistence type="inferred from homology"/>